<organism>
    <name type="scientific">Homo sapiens</name>
    <name type="common">Human</name>
    <dbReference type="NCBI Taxonomy" id="9606"/>
    <lineage>
        <taxon>Eukaryota</taxon>
        <taxon>Metazoa</taxon>
        <taxon>Chordata</taxon>
        <taxon>Craniata</taxon>
        <taxon>Vertebrata</taxon>
        <taxon>Euteleostomi</taxon>
        <taxon>Mammalia</taxon>
        <taxon>Eutheria</taxon>
        <taxon>Euarchontoglires</taxon>
        <taxon>Primates</taxon>
        <taxon>Haplorrhini</taxon>
        <taxon>Catarrhini</taxon>
        <taxon>Hominidae</taxon>
        <taxon>Homo</taxon>
    </lineage>
</organism>
<protein>
    <recommendedName>
        <fullName>Olfactory receptor 4F17</fullName>
    </recommendedName>
    <alternativeName>
        <fullName>Olfactory receptor 4F11</fullName>
    </alternativeName>
    <alternativeName>
        <fullName>Olfactory receptor 4F18</fullName>
    </alternativeName>
    <alternativeName>
        <fullName>Olfactory receptor 4F19</fullName>
    </alternativeName>
</protein>
<feature type="chain" id="PRO_0000150550" description="Olfactory receptor 4F17">
    <location>
        <begin position="1"/>
        <end position="305"/>
    </location>
</feature>
<feature type="topological domain" description="Extracellular" evidence="1">
    <location>
        <begin position="1"/>
        <end position="18"/>
    </location>
</feature>
<feature type="transmembrane region" description="Helical; Name=1" evidence="1">
    <location>
        <begin position="19"/>
        <end position="42"/>
    </location>
</feature>
<feature type="topological domain" description="Cytoplasmic" evidence="1">
    <location>
        <begin position="43"/>
        <end position="50"/>
    </location>
</feature>
<feature type="transmembrane region" description="Helical; Name=2" evidence="1">
    <location>
        <begin position="51"/>
        <end position="72"/>
    </location>
</feature>
<feature type="topological domain" description="Extracellular" evidence="1">
    <location>
        <begin position="73"/>
        <end position="93"/>
    </location>
</feature>
<feature type="transmembrane region" description="Helical; Name=3" evidence="1">
    <location>
        <begin position="94"/>
        <end position="113"/>
    </location>
</feature>
<feature type="topological domain" description="Cytoplasmic" evidence="1">
    <location>
        <begin position="114"/>
        <end position="132"/>
    </location>
</feature>
<feature type="transmembrane region" description="Helical; Name=4" evidence="1">
    <location>
        <begin position="133"/>
        <end position="151"/>
    </location>
</feature>
<feature type="topological domain" description="Extracellular" evidence="1">
    <location>
        <begin position="152"/>
        <end position="188"/>
    </location>
</feature>
<feature type="transmembrane region" description="Helical; Name=5" evidence="1">
    <location>
        <begin position="189"/>
        <end position="212"/>
    </location>
</feature>
<feature type="topological domain" description="Cytoplasmic" evidence="1">
    <location>
        <begin position="213"/>
        <end position="228"/>
    </location>
</feature>
<feature type="transmembrane region" description="Helical; Name=6" evidence="1">
    <location>
        <begin position="229"/>
        <end position="251"/>
    </location>
</feature>
<feature type="topological domain" description="Extracellular" evidence="1">
    <location>
        <begin position="252"/>
        <end position="262"/>
    </location>
</feature>
<feature type="transmembrane region" description="Helical; Name=7" evidence="1">
    <location>
        <begin position="263"/>
        <end position="282"/>
    </location>
</feature>
<feature type="topological domain" description="Cytoplasmic" evidence="1">
    <location>
        <begin position="283"/>
        <end position="305"/>
    </location>
</feature>
<feature type="disulfide bond" evidence="2">
    <location>
        <begin position="90"/>
        <end position="182"/>
    </location>
</feature>
<proteinExistence type="evidence at transcript level"/>
<comment type="function">
    <text evidence="3">Odorant receptor.</text>
</comment>
<comment type="subcellular location">
    <subcellularLocation>
        <location>Cell membrane</location>
        <topology>Multi-pass membrane protein</topology>
    </subcellularLocation>
</comment>
<comment type="similarity">
    <text evidence="2">Belongs to the G-protein coupled receptor 1 family.</text>
</comment>
<comment type="online information" name="Human Olfactory Receptor Data Exploratorium (HORDE)">
    <link uri="http://genome.weizmann.ac.il/horde/card/index/symbol:OR4F17"/>
</comment>
<evidence type="ECO:0000255" key="1"/>
<evidence type="ECO:0000255" key="2">
    <source>
        <dbReference type="PROSITE-ProRule" id="PRU00521"/>
    </source>
</evidence>
<evidence type="ECO:0000305" key="3"/>
<keyword id="KW-1003">Cell membrane</keyword>
<keyword id="KW-1015">Disulfide bond</keyword>
<keyword id="KW-0297">G-protein coupled receptor</keyword>
<keyword id="KW-0472">Membrane</keyword>
<keyword id="KW-0552">Olfaction</keyword>
<keyword id="KW-0675">Receptor</keyword>
<keyword id="KW-1185">Reference proteome</keyword>
<keyword id="KW-0716">Sensory transduction</keyword>
<keyword id="KW-0807">Transducer</keyword>
<keyword id="KW-0812">Transmembrane</keyword>
<keyword id="KW-1133">Transmembrane helix</keyword>
<sequence>MVTEFIFLGLSDSQGLQTFLFMLFFVFYGGIVFGNLLIVITVVSDSHLHSPMYFLLANLSLIDLSLSSVTAPKMITDFFSQRKVISFKGCLVQIFLLHFFGGSEMVILIAMGFDRYIAICKPLHYTTIMCGNACVGIMAVAWGIGFLHSVSQLAFAVHLPFCGPNEVDSFYCDLPRVIKLACTDTYRLDIMVIANSGVLTVCSFVLLIISYTIILMTIQHRPLDKSSKALSTLTAHITVVLLFFGPCVFIYAWPFPIKSLDKFLAVFYSVITPLLNPIIYTLRNKDMKTAIRQLRKWDAHSSVKF</sequence>
<gene>
    <name type="primary">OR4F17</name>
    <name type="synonym">OR4F11P</name>
    <name type="synonym">OR4F18</name>
    <name type="synonym">OR4F19</name>
</gene>
<reference key="1">
    <citation type="submission" date="2001-07" db="EMBL/GenBank/DDBJ databases">
        <title>Genome-wide discovery and analysis of human seven transmembrane helix receptor genes.</title>
        <authorList>
            <person name="Suwa M."/>
            <person name="Sato T."/>
            <person name="Okouchi I."/>
            <person name="Arita M."/>
            <person name="Futami K."/>
            <person name="Matsumoto S."/>
            <person name="Tsutsumi S."/>
            <person name="Aburatani H."/>
            <person name="Asai K."/>
            <person name="Akiyama Y."/>
        </authorList>
    </citation>
    <scope>NUCLEOTIDE SEQUENCE [GENOMIC DNA]</scope>
</reference>
<reference key="2">
    <citation type="journal article" date="2004" name="Genome Res.">
        <title>The status, quality, and expansion of the NIH full-length cDNA project: the Mammalian Gene Collection (MGC).</title>
        <authorList>
            <consortium name="The MGC Project Team"/>
        </authorList>
    </citation>
    <scope>NUCLEOTIDE SEQUENCE [LARGE SCALE MRNA]</scope>
</reference>
<dbReference type="EMBL" id="AB065917">
    <property type="protein sequence ID" value="BAC06132.1"/>
    <property type="molecule type" value="Genomic_DNA"/>
</dbReference>
<dbReference type="EMBL" id="BC136848">
    <property type="protein sequence ID" value="AAI36849.1"/>
    <property type="molecule type" value="mRNA"/>
</dbReference>
<dbReference type="EMBL" id="BC136867">
    <property type="protein sequence ID" value="AAI36868.1"/>
    <property type="molecule type" value="mRNA"/>
</dbReference>
<dbReference type="CCDS" id="CCDS32854.1"/>
<dbReference type="RefSeq" id="NP_001005240.1">
    <property type="nucleotide sequence ID" value="NM_001005240.3"/>
</dbReference>
<dbReference type="RefSeq" id="XP_005259705.1">
    <property type="nucleotide sequence ID" value="XM_005259648.1"/>
</dbReference>
<dbReference type="SMR" id="Q8NGA8"/>
<dbReference type="BioGRID" id="123365">
    <property type="interactions" value="2"/>
</dbReference>
<dbReference type="FunCoup" id="Q8NGA8">
    <property type="interactions" value="549"/>
</dbReference>
<dbReference type="STRING" id="9606.ENSP00000467301"/>
<dbReference type="iPTMnet" id="Q8NGA8"/>
<dbReference type="PhosphoSitePlus" id="Q8NGA8"/>
<dbReference type="BioMuta" id="OR4F17"/>
<dbReference type="DMDM" id="38372655"/>
<dbReference type="PaxDb" id="9606-ENSP00000467301"/>
<dbReference type="PeptideAtlas" id="Q8NGA8"/>
<dbReference type="Antibodypedia" id="59203">
    <property type="antibodies" value="73 antibodies from 21 providers"/>
</dbReference>
<dbReference type="DNASU" id="81099"/>
<dbReference type="Ensembl" id="ENST00000318050.4">
    <property type="protein sequence ID" value="ENSP00000315047.3"/>
    <property type="gene ID" value="ENSG00000176695.8"/>
</dbReference>
<dbReference type="Ensembl" id="ENST00000585993.3">
    <property type="protein sequence ID" value="ENSP00000467301.1"/>
    <property type="gene ID" value="ENSG00000176695.8"/>
</dbReference>
<dbReference type="GeneID" id="81099"/>
<dbReference type="KEGG" id="hsa:81099"/>
<dbReference type="MANE-Select" id="ENST00000585993.3">
    <property type="protein sequence ID" value="ENSP00000467301.1"/>
    <property type="RefSeq nucleotide sequence ID" value="NM_001005240.3"/>
    <property type="RefSeq protein sequence ID" value="NP_001005240.1"/>
</dbReference>
<dbReference type="UCSC" id="uc002loc.2">
    <property type="organism name" value="human"/>
</dbReference>
<dbReference type="AGR" id="HGNC:15381"/>
<dbReference type="CTD" id="81099"/>
<dbReference type="GeneCards" id="OR4F17"/>
<dbReference type="HGNC" id="HGNC:15381">
    <property type="gene designation" value="OR4F17"/>
</dbReference>
<dbReference type="HPA" id="ENSG00000176695">
    <property type="expression patterns" value="Not detected"/>
</dbReference>
<dbReference type="neXtProt" id="NX_Q8NGA8"/>
<dbReference type="OpenTargets" id="ENSG00000176695"/>
<dbReference type="PharmGKB" id="PA32285"/>
<dbReference type="VEuPathDB" id="HostDB:ENSG00000176695"/>
<dbReference type="eggNOG" id="ENOG502SKZV">
    <property type="taxonomic scope" value="Eukaryota"/>
</dbReference>
<dbReference type="GeneTree" id="ENSGT00940000162706"/>
<dbReference type="HOGENOM" id="CLU_012526_8_1_1"/>
<dbReference type="InParanoid" id="Q8NGA8"/>
<dbReference type="OMA" id="LRKWDVH"/>
<dbReference type="OrthoDB" id="10254436at2759"/>
<dbReference type="PAN-GO" id="Q8NGA8">
    <property type="GO annotations" value="2 GO annotations based on evolutionary models"/>
</dbReference>
<dbReference type="PhylomeDB" id="Q8NGA8"/>
<dbReference type="PathwayCommons" id="Q8NGA8"/>
<dbReference type="Reactome" id="R-HSA-381753">
    <property type="pathway name" value="Olfactory Signaling Pathway"/>
</dbReference>
<dbReference type="Reactome" id="R-HSA-9752946">
    <property type="pathway name" value="Expression and translocation of olfactory receptors"/>
</dbReference>
<dbReference type="BioGRID-ORCS" id="81099">
    <property type="hits" value="34 hits in 241 CRISPR screens"/>
</dbReference>
<dbReference type="GenomeRNAi" id="81099"/>
<dbReference type="Pharos" id="Q8NGA8">
    <property type="development level" value="Tdark"/>
</dbReference>
<dbReference type="PRO" id="PR:Q8NGA8"/>
<dbReference type="Proteomes" id="UP000005640">
    <property type="component" value="Chromosome 19"/>
</dbReference>
<dbReference type="RNAct" id="Q8NGA8">
    <property type="molecule type" value="protein"/>
</dbReference>
<dbReference type="Bgee" id="ENSG00000176695">
    <property type="expression patterns" value="Expressed in colonic epithelium and 66 other cell types or tissues"/>
</dbReference>
<dbReference type="ExpressionAtlas" id="Q8NGA8">
    <property type="expression patterns" value="baseline and differential"/>
</dbReference>
<dbReference type="GO" id="GO:0005886">
    <property type="term" value="C:plasma membrane"/>
    <property type="evidence" value="ECO:0000304"/>
    <property type="project" value="Reactome"/>
</dbReference>
<dbReference type="GO" id="GO:0004930">
    <property type="term" value="F:G protein-coupled receptor activity"/>
    <property type="evidence" value="ECO:0007669"/>
    <property type="project" value="UniProtKB-KW"/>
</dbReference>
<dbReference type="GO" id="GO:0004984">
    <property type="term" value="F:olfactory receptor activity"/>
    <property type="evidence" value="ECO:0000318"/>
    <property type="project" value="GO_Central"/>
</dbReference>
<dbReference type="CDD" id="cd15226">
    <property type="entry name" value="7tmA_OR4-like"/>
    <property type="match status" value="1"/>
</dbReference>
<dbReference type="FunFam" id="1.20.1070.10:FF:000012">
    <property type="entry name" value="Olfactory receptor"/>
    <property type="match status" value="1"/>
</dbReference>
<dbReference type="Gene3D" id="1.20.1070.10">
    <property type="entry name" value="Rhodopsin 7-helix transmembrane proteins"/>
    <property type="match status" value="1"/>
</dbReference>
<dbReference type="InterPro" id="IPR000276">
    <property type="entry name" value="GPCR_Rhodpsn"/>
</dbReference>
<dbReference type="InterPro" id="IPR017452">
    <property type="entry name" value="GPCR_Rhodpsn_7TM"/>
</dbReference>
<dbReference type="InterPro" id="IPR000725">
    <property type="entry name" value="Olfact_rcpt"/>
</dbReference>
<dbReference type="InterPro" id="IPR050427">
    <property type="entry name" value="Olfactory_Receptors"/>
</dbReference>
<dbReference type="PANTHER" id="PTHR48002">
    <property type="entry name" value="OLFACTORY RECEPTOR"/>
    <property type="match status" value="1"/>
</dbReference>
<dbReference type="Pfam" id="PF13853">
    <property type="entry name" value="7tm_4"/>
    <property type="match status" value="1"/>
</dbReference>
<dbReference type="PRINTS" id="PR00237">
    <property type="entry name" value="GPCRRHODOPSN"/>
</dbReference>
<dbReference type="PRINTS" id="PR00245">
    <property type="entry name" value="OLFACTORYR"/>
</dbReference>
<dbReference type="SUPFAM" id="SSF81321">
    <property type="entry name" value="Family A G protein-coupled receptor-like"/>
    <property type="match status" value="1"/>
</dbReference>
<dbReference type="PROSITE" id="PS00237">
    <property type="entry name" value="G_PROTEIN_RECEP_F1_1"/>
    <property type="match status" value="1"/>
</dbReference>
<dbReference type="PROSITE" id="PS50262">
    <property type="entry name" value="G_PROTEIN_RECEP_F1_2"/>
    <property type="match status" value="1"/>
</dbReference>
<accession>Q8NGA8</accession>
<accession>B2RNE8</accession>
<name>O4F17_HUMAN</name>